<gene>
    <name type="primary">Eefsec</name>
    <name evidence="8" type="synonym">Selb</name>
</gene>
<sequence length="583" mass="63539">MAGRRVNVNVGVLGHIDSGKTALARALSTTASTAAFDKQPQSRERGITLDLGFSCFVVPLPGAEPGSSDTLLQVTLVDCPGHASLIRTIIGGAQIIDLMMLVIDVTKGMQTQSAECLVIGQIACQKLVVVLNKIDLLAEGKRQAAIDKMTKKMQKTLENTKFRGAPIIPVAAKPGGPEAPETEAPQGISELIELLKSQISIPTRDPSGPFLMSVDHCFSIKGQGTVMTGTILSGTISLGDSVEIPALKVVKKVKSMQMFHTPVTSAMQGDRLGICVTQFDPKLLERGLVCAPESLHTVHAALISVEKIPYFRGPLQTKAKFHITVGHETVMGRTLFFSPAPDSFDLEPVLDSFDLSREYLFQEQYLCKDSMPTATEGDDEADPKAGHAPGGHCPRQQWALVEFEKPVTCPRLCLVIGSRLDADIHTNTCRLAFHGVLLQGLEDKNYIESFLPALRVYKLKHKHGLVERVMDDYSVIGRSLFKKETNIQLFVGLKVQLSTGEQGIIDSAFGQSGKFKIHIPGGLSPESKKILTPTLKKRSRAGRGETTKPEEGTERPEPIQPVTLNLSFKRYVFDTQKRMVQTP</sequence>
<proteinExistence type="evidence at protein level"/>
<organism>
    <name type="scientific">Mus musculus</name>
    <name type="common">Mouse</name>
    <dbReference type="NCBI Taxonomy" id="10090"/>
    <lineage>
        <taxon>Eukaryota</taxon>
        <taxon>Metazoa</taxon>
        <taxon>Chordata</taxon>
        <taxon>Craniata</taxon>
        <taxon>Vertebrata</taxon>
        <taxon>Euteleostomi</taxon>
        <taxon>Mammalia</taxon>
        <taxon>Eutheria</taxon>
        <taxon>Euarchontoglires</taxon>
        <taxon>Glires</taxon>
        <taxon>Rodentia</taxon>
        <taxon>Myomorpha</taxon>
        <taxon>Muroidea</taxon>
        <taxon>Muridae</taxon>
        <taxon>Murinae</taxon>
        <taxon>Mus</taxon>
        <taxon>Mus</taxon>
    </lineage>
</organism>
<keyword id="KW-0963">Cytoplasm</keyword>
<keyword id="KW-0342">GTP-binding</keyword>
<keyword id="KW-0378">Hydrolase</keyword>
<keyword id="KW-0460">Magnesium</keyword>
<keyword id="KW-0479">Metal-binding</keyword>
<keyword id="KW-0488">Methylation</keyword>
<keyword id="KW-0547">Nucleotide-binding</keyword>
<keyword id="KW-0539">Nucleus</keyword>
<keyword id="KW-0597">Phosphoprotein</keyword>
<keyword id="KW-0648">Protein biosynthesis</keyword>
<keyword id="KW-1185">Reference proteome</keyword>
<feature type="chain" id="PRO_0000091479" description="Selenocysteine-specific elongation factor">
    <location>
        <begin position="1"/>
        <end position="583"/>
    </location>
</feature>
<feature type="domain" description="tr-type G" evidence="3">
    <location>
        <begin position="5"/>
        <end position="203"/>
    </location>
</feature>
<feature type="region of interest" description="G1" evidence="3">
    <location>
        <begin position="14"/>
        <end position="21"/>
    </location>
</feature>
<feature type="region of interest" description="G2" evidence="3">
    <location>
        <begin position="46"/>
        <end position="50"/>
    </location>
</feature>
<feature type="region of interest" description="G3" evidence="3">
    <location>
        <begin position="78"/>
        <end position="81"/>
    </location>
</feature>
<feature type="region of interest" description="G4" evidence="3">
    <location>
        <begin position="132"/>
        <end position="135"/>
    </location>
</feature>
<feature type="region of interest" description="G5" evidence="3">
    <location>
        <begin position="171"/>
        <end position="173"/>
    </location>
</feature>
<feature type="region of interest" description="Disordered" evidence="4">
    <location>
        <begin position="371"/>
        <end position="390"/>
    </location>
</feature>
<feature type="region of interest" description="Disordered" evidence="4">
    <location>
        <begin position="528"/>
        <end position="562"/>
    </location>
</feature>
<feature type="short sequence motif" description="Nuclear localization signal" evidence="2">
    <location>
        <begin position="534"/>
        <end position="540"/>
    </location>
</feature>
<feature type="compositionally biased region" description="Basic and acidic residues" evidence="4">
    <location>
        <begin position="542"/>
        <end position="557"/>
    </location>
</feature>
<feature type="binding site" evidence="1">
    <location>
        <position position="19"/>
    </location>
    <ligand>
        <name>GTP</name>
        <dbReference type="ChEBI" id="CHEBI:37565"/>
    </ligand>
</feature>
<feature type="binding site" evidence="1">
    <location>
        <position position="21"/>
    </location>
    <ligand>
        <name>GTP</name>
        <dbReference type="ChEBI" id="CHEBI:37565"/>
    </ligand>
</feature>
<feature type="binding site" evidence="1">
    <location>
        <position position="21"/>
    </location>
    <ligand>
        <name>Mg(2+)</name>
        <dbReference type="ChEBI" id="CHEBI:18420"/>
    </ligand>
</feature>
<feature type="binding site" evidence="1">
    <location>
        <position position="22"/>
    </location>
    <ligand>
        <name>GTP</name>
        <dbReference type="ChEBI" id="CHEBI:37565"/>
    </ligand>
</feature>
<feature type="binding site" evidence="1">
    <location>
        <position position="48"/>
    </location>
    <ligand>
        <name>Mg(2+)</name>
        <dbReference type="ChEBI" id="CHEBI:18420"/>
    </ligand>
</feature>
<feature type="binding site" evidence="1">
    <location>
        <position position="78"/>
    </location>
    <ligand>
        <name>Mg(2+)</name>
        <dbReference type="ChEBI" id="CHEBI:18420"/>
    </ligand>
</feature>
<feature type="binding site" evidence="1">
    <location>
        <position position="135"/>
    </location>
    <ligand>
        <name>GTP</name>
        <dbReference type="ChEBI" id="CHEBI:37565"/>
    </ligand>
</feature>
<feature type="binding site" evidence="1">
    <location>
        <position position="173"/>
    </location>
    <ligand>
        <name>GTP</name>
        <dbReference type="ChEBI" id="CHEBI:37565"/>
    </ligand>
</feature>
<feature type="modified residue" description="Phosphoserine" evidence="1">
    <location>
        <position position="524"/>
    </location>
</feature>
<feature type="modified residue" description="Phosphothreonine" evidence="10">
    <location>
        <position position="532"/>
    </location>
</feature>
<feature type="modified residue" description="Omega-N-methylarginine" evidence="11">
    <location>
        <position position="543"/>
    </location>
</feature>
<feature type="mutagenesis site" description="Slightly decreased incorporation of selenocysteine." evidence="7">
    <original>VERVM</original>
    <variation>AAAAA</variation>
    <location>
        <begin position="466"/>
        <end position="470"/>
    </location>
</feature>
<feature type="mutagenesis site" description="Decreased incorporation of selenocysteine." evidence="7">
    <original>LFKKE</original>
    <variation>AAAAA</variation>
    <location>
        <begin position="480"/>
        <end position="484"/>
    </location>
</feature>
<feature type="mutagenesis site" description="Decreased incorporation of selenocysteine." evidence="7">
    <original>FGQSG</original>
    <variation>AAAAA</variation>
    <location>
        <begin position="509"/>
        <end position="513"/>
    </location>
</feature>
<feature type="mutagenesis site" description="Decreased incorporation of selenocysteine." evidence="7">
    <original>KKRSR</original>
    <variation>AAAAA</variation>
    <location>
        <begin position="536"/>
        <end position="540"/>
    </location>
</feature>
<feature type="mutagenesis site" description="Decreased incorporation of selenocysteine." evidence="7">
    <original>KRYVF</original>
    <variation>AAAAA</variation>
    <location>
        <begin position="569"/>
        <end position="573"/>
    </location>
</feature>
<feature type="sequence conflict" description="In Ref. 1; AAF91471." evidence="9" ref="1">
    <original>F</original>
    <variation>S</variation>
    <location>
        <position position="162"/>
    </location>
</feature>
<feature type="sequence conflict" description="In Ref. 1; AAF91471." evidence="9" ref="1">
    <original>Y</original>
    <variation>T</variation>
    <location>
        <position position="457"/>
    </location>
</feature>
<reference key="1">
    <citation type="journal article" date="2000" name="EMBO Rep.">
        <title>Decoding apparatus for eukaryotic selenocysteine insertion.</title>
        <authorList>
            <person name="Tujebajeva R.M."/>
            <person name="Copeland P.R."/>
            <person name="Xu X."/>
            <person name="Carlson B.A."/>
            <person name="Harney J.W."/>
            <person name="Driscoll D.M."/>
            <person name="Hatfield D.L."/>
            <person name="Berry M.J."/>
        </authorList>
    </citation>
    <scope>NUCLEOTIDE SEQUENCE [MRNA]</scope>
    <scope>FUNCTION</scope>
</reference>
<reference key="2">
    <citation type="journal article" date="2000" name="EMBO J.">
        <title>Characterization of mSelB, a novel mammalian elongation factor for selenoprotein translation.</title>
        <authorList>
            <person name="Fagegaltier D."/>
            <person name="Hubert N."/>
            <person name="Yamada K."/>
            <person name="Mizutani T."/>
            <person name="Carbon P."/>
            <person name="Krol A."/>
        </authorList>
    </citation>
    <scope>NUCLEOTIDE SEQUENCE [MRNA]</scope>
    <scope>FUNCTION</scope>
</reference>
<reference key="3">
    <citation type="journal article" date="2005" name="Science">
        <title>The transcriptional landscape of the mammalian genome.</title>
        <authorList>
            <person name="Carninci P."/>
            <person name="Kasukawa T."/>
            <person name="Katayama S."/>
            <person name="Gough J."/>
            <person name="Frith M.C."/>
            <person name="Maeda N."/>
            <person name="Oyama R."/>
            <person name="Ravasi T."/>
            <person name="Lenhard B."/>
            <person name="Wells C."/>
            <person name="Kodzius R."/>
            <person name="Shimokawa K."/>
            <person name="Bajic V.B."/>
            <person name="Brenner S.E."/>
            <person name="Batalov S."/>
            <person name="Forrest A.R."/>
            <person name="Zavolan M."/>
            <person name="Davis M.J."/>
            <person name="Wilming L.G."/>
            <person name="Aidinis V."/>
            <person name="Allen J.E."/>
            <person name="Ambesi-Impiombato A."/>
            <person name="Apweiler R."/>
            <person name="Aturaliya R.N."/>
            <person name="Bailey T.L."/>
            <person name="Bansal M."/>
            <person name="Baxter L."/>
            <person name="Beisel K.W."/>
            <person name="Bersano T."/>
            <person name="Bono H."/>
            <person name="Chalk A.M."/>
            <person name="Chiu K.P."/>
            <person name="Choudhary V."/>
            <person name="Christoffels A."/>
            <person name="Clutterbuck D.R."/>
            <person name="Crowe M.L."/>
            <person name="Dalla E."/>
            <person name="Dalrymple B.P."/>
            <person name="de Bono B."/>
            <person name="Della Gatta G."/>
            <person name="di Bernardo D."/>
            <person name="Down T."/>
            <person name="Engstrom P."/>
            <person name="Fagiolini M."/>
            <person name="Faulkner G."/>
            <person name="Fletcher C.F."/>
            <person name="Fukushima T."/>
            <person name="Furuno M."/>
            <person name="Futaki S."/>
            <person name="Gariboldi M."/>
            <person name="Georgii-Hemming P."/>
            <person name="Gingeras T.R."/>
            <person name="Gojobori T."/>
            <person name="Green R.E."/>
            <person name="Gustincich S."/>
            <person name="Harbers M."/>
            <person name="Hayashi Y."/>
            <person name="Hensch T.K."/>
            <person name="Hirokawa N."/>
            <person name="Hill D."/>
            <person name="Huminiecki L."/>
            <person name="Iacono M."/>
            <person name="Ikeo K."/>
            <person name="Iwama A."/>
            <person name="Ishikawa T."/>
            <person name="Jakt M."/>
            <person name="Kanapin A."/>
            <person name="Katoh M."/>
            <person name="Kawasawa Y."/>
            <person name="Kelso J."/>
            <person name="Kitamura H."/>
            <person name="Kitano H."/>
            <person name="Kollias G."/>
            <person name="Krishnan S.P."/>
            <person name="Kruger A."/>
            <person name="Kummerfeld S.K."/>
            <person name="Kurochkin I.V."/>
            <person name="Lareau L.F."/>
            <person name="Lazarevic D."/>
            <person name="Lipovich L."/>
            <person name="Liu J."/>
            <person name="Liuni S."/>
            <person name="McWilliam S."/>
            <person name="Madan Babu M."/>
            <person name="Madera M."/>
            <person name="Marchionni L."/>
            <person name="Matsuda H."/>
            <person name="Matsuzawa S."/>
            <person name="Miki H."/>
            <person name="Mignone F."/>
            <person name="Miyake S."/>
            <person name="Morris K."/>
            <person name="Mottagui-Tabar S."/>
            <person name="Mulder N."/>
            <person name="Nakano N."/>
            <person name="Nakauchi H."/>
            <person name="Ng P."/>
            <person name="Nilsson R."/>
            <person name="Nishiguchi S."/>
            <person name="Nishikawa S."/>
            <person name="Nori F."/>
            <person name="Ohara O."/>
            <person name="Okazaki Y."/>
            <person name="Orlando V."/>
            <person name="Pang K.C."/>
            <person name="Pavan W.J."/>
            <person name="Pavesi G."/>
            <person name="Pesole G."/>
            <person name="Petrovsky N."/>
            <person name="Piazza S."/>
            <person name="Reed J."/>
            <person name="Reid J.F."/>
            <person name="Ring B.Z."/>
            <person name="Ringwald M."/>
            <person name="Rost B."/>
            <person name="Ruan Y."/>
            <person name="Salzberg S.L."/>
            <person name="Sandelin A."/>
            <person name="Schneider C."/>
            <person name="Schoenbach C."/>
            <person name="Sekiguchi K."/>
            <person name="Semple C.A."/>
            <person name="Seno S."/>
            <person name="Sessa L."/>
            <person name="Sheng Y."/>
            <person name="Shibata Y."/>
            <person name="Shimada H."/>
            <person name="Shimada K."/>
            <person name="Silva D."/>
            <person name="Sinclair B."/>
            <person name="Sperling S."/>
            <person name="Stupka E."/>
            <person name="Sugiura K."/>
            <person name="Sultana R."/>
            <person name="Takenaka Y."/>
            <person name="Taki K."/>
            <person name="Tammoja K."/>
            <person name="Tan S.L."/>
            <person name="Tang S."/>
            <person name="Taylor M.S."/>
            <person name="Tegner J."/>
            <person name="Teichmann S.A."/>
            <person name="Ueda H.R."/>
            <person name="van Nimwegen E."/>
            <person name="Verardo R."/>
            <person name="Wei C.L."/>
            <person name="Yagi K."/>
            <person name="Yamanishi H."/>
            <person name="Zabarovsky E."/>
            <person name="Zhu S."/>
            <person name="Zimmer A."/>
            <person name="Hide W."/>
            <person name="Bult C."/>
            <person name="Grimmond S.M."/>
            <person name="Teasdale R.D."/>
            <person name="Liu E.T."/>
            <person name="Brusic V."/>
            <person name="Quackenbush J."/>
            <person name="Wahlestedt C."/>
            <person name="Mattick J.S."/>
            <person name="Hume D.A."/>
            <person name="Kai C."/>
            <person name="Sasaki D."/>
            <person name="Tomaru Y."/>
            <person name="Fukuda S."/>
            <person name="Kanamori-Katayama M."/>
            <person name="Suzuki M."/>
            <person name="Aoki J."/>
            <person name="Arakawa T."/>
            <person name="Iida J."/>
            <person name="Imamura K."/>
            <person name="Itoh M."/>
            <person name="Kato T."/>
            <person name="Kawaji H."/>
            <person name="Kawagashira N."/>
            <person name="Kawashima T."/>
            <person name="Kojima M."/>
            <person name="Kondo S."/>
            <person name="Konno H."/>
            <person name="Nakano K."/>
            <person name="Ninomiya N."/>
            <person name="Nishio T."/>
            <person name="Okada M."/>
            <person name="Plessy C."/>
            <person name="Shibata K."/>
            <person name="Shiraki T."/>
            <person name="Suzuki S."/>
            <person name="Tagami M."/>
            <person name="Waki K."/>
            <person name="Watahiki A."/>
            <person name="Okamura-Oho Y."/>
            <person name="Suzuki H."/>
            <person name="Kawai J."/>
            <person name="Hayashizaki Y."/>
        </authorList>
    </citation>
    <scope>NUCLEOTIDE SEQUENCE [LARGE SCALE MRNA]</scope>
    <source>
        <strain>C57BL/6J</strain>
        <tissue>Liver</tissue>
    </source>
</reference>
<reference key="4">
    <citation type="submission" date="2005-07" db="EMBL/GenBank/DDBJ databases">
        <authorList>
            <person name="Mural R.J."/>
            <person name="Adams M.D."/>
            <person name="Myers E.W."/>
            <person name="Smith H.O."/>
            <person name="Venter J.C."/>
        </authorList>
    </citation>
    <scope>NUCLEOTIDE SEQUENCE [LARGE SCALE GENOMIC DNA]</scope>
</reference>
<reference key="5">
    <citation type="journal article" date="2004" name="Genome Res.">
        <title>The status, quality, and expansion of the NIH full-length cDNA project: the Mammalian Gene Collection (MGC).</title>
        <authorList>
            <consortium name="The MGC Project Team"/>
        </authorList>
    </citation>
    <scope>NUCLEOTIDE SEQUENCE [LARGE SCALE MRNA]</scope>
    <source>
        <strain>FVB/N</strain>
        <tissue>Mammary tumor</tissue>
    </source>
</reference>
<reference key="6">
    <citation type="journal article" date="2010" name="Cell">
        <title>A tissue-specific atlas of mouse protein phosphorylation and expression.</title>
        <authorList>
            <person name="Huttlin E.L."/>
            <person name="Jedrychowski M.P."/>
            <person name="Elias J.E."/>
            <person name="Goswami T."/>
            <person name="Rad R."/>
            <person name="Beausoleil S.A."/>
            <person name="Villen J."/>
            <person name="Haas W."/>
            <person name="Sowa M.E."/>
            <person name="Gygi S.P."/>
        </authorList>
    </citation>
    <scope>PHOSPHORYLATION [LARGE SCALE ANALYSIS] AT THR-532</scope>
    <scope>IDENTIFICATION BY MASS SPECTROMETRY [LARGE SCALE ANALYSIS]</scope>
    <source>
        <tissue>Brain</tissue>
        <tissue>Heart</tissue>
        <tissue>Kidney</tissue>
        <tissue>Liver</tissue>
        <tissue>Lung</tissue>
        <tissue>Pancreas</tissue>
        <tissue>Spleen</tissue>
        <tissue>Testis</tissue>
    </source>
</reference>
<reference key="7">
    <citation type="journal article" date="2012" name="J. Biol. Chem.">
        <title>The selenocysteine-specific elongation factor contains a novel and multi-functional domain.</title>
        <authorList>
            <person name="Gonzalez-Flores J.N."/>
            <person name="Gupta N."/>
            <person name="DeMong L.W."/>
            <person name="Copeland P.R."/>
        </authorList>
    </citation>
    <scope>FUNCTION</scope>
    <scope>CATALYTIC ACTIVITY</scope>
    <scope>MUTAGENESIS OF 466-VAL--MET-470; 480-LEU--GLU-484; 509-PHE--GLY-513; 536-LYS--ARG-540 AND 569-LYS--PHE-573</scope>
</reference>
<reference key="8">
    <citation type="journal article" date="2014" name="Mol. Cell. Proteomics">
        <title>Immunoaffinity enrichment and mass spectrometry analysis of protein methylation.</title>
        <authorList>
            <person name="Guo A."/>
            <person name="Gu H."/>
            <person name="Zhou J."/>
            <person name="Mulhern D."/>
            <person name="Wang Y."/>
            <person name="Lee K.A."/>
            <person name="Yang V."/>
            <person name="Aguiar M."/>
            <person name="Kornhauser J."/>
            <person name="Jia X."/>
            <person name="Ren J."/>
            <person name="Beausoleil S.A."/>
            <person name="Silva J.C."/>
            <person name="Vemulapalli V."/>
            <person name="Bedford M.T."/>
            <person name="Comb M.J."/>
        </authorList>
    </citation>
    <scope>METHYLATION [LARGE SCALE ANALYSIS] AT ARG-543</scope>
    <scope>IDENTIFICATION BY MASS SPECTROMETRY [LARGE SCALE ANALYSIS]</scope>
    <source>
        <tissue>Brain</tissue>
        <tissue>Embryo</tissue>
    </source>
</reference>
<evidence type="ECO:0000250" key="1">
    <source>
        <dbReference type="UniProtKB" id="P57772"/>
    </source>
</evidence>
<evidence type="ECO:0000255" key="2"/>
<evidence type="ECO:0000255" key="3">
    <source>
        <dbReference type="PROSITE-ProRule" id="PRU01059"/>
    </source>
</evidence>
<evidence type="ECO:0000256" key="4">
    <source>
        <dbReference type="SAM" id="MobiDB-lite"/>
    </source>
</evidence>
<evidence type="ECO:0000269" key="5">
    <source>
    </source>
</evidence>
<evidence type="ECO:0000269" key="6">
    <source>
    </source>
</evidence>
<evidence type="ECO:0000269" key="7">
    <source>
    </source>
</evidence>
<evidence type="ECO:0000303" key="8">
    <source>
    </source>
</evidence>
<evidence type="ECO:0000305" key="9"/>
<evidence type="ECO:0007744" key="10">
    <source>
    </source>
</evidence>
<evidence type="ECO:0007744" key="11">
    <source>
    </source>
</evidence>
<name>SELB_MOUSE</name>
<comment type="function">
    <text evidence="1 5 6 7">Translation factor required for the incorporation of the rare amino acid selenocysteine encoded by UGA codons (PubMed:10970870, PubMed:11265756, PubMed:22992746). Replaces the eRF1-eRF3-GTP ternary complex for the insertion of selenocysteine directed by the UGA codon (PubMed:10970870, PubMed:11265756, PubMed:22992746). Insertion of selenocysteine at UGA codons is mediated by SECISBP2 and EEFSEC: SECISBP2 (1) specifically binds the SECIS sequence once the 80S ribosome encounters an in-frame UGA codon and (2) contacts the RPS27A/eS31 of the 40S ribosome before ribosome stalling (By similarity). (3) GTP-bound EEFSEC then delivers selenocysteinyl-tRNA(Sec) to the 80S ribosome and adopts a preaccommodated state conformation (By similarity). (4) After GTP hydrolysis, EEFSEC dissociates from the assembly, selenocysteinyl-tRNA(Sec) accommodates, and peptide bond synthesis and selenoprotein elongation occur (By similarity).</text>
</comment>
<comment type="catalytic activity">
    <reaction evidence="7">
        <text>GTP + H2O = GDP + phosphate + H(+)</text>
        <dbReference type="Rhea" id="RHEA:19669"/>
        <dbReference type="ChEBI" id="CHEBI:15377"/>
        <dbReference type="ChEBI" id="CHEBI:15378"/>
        <dbReference type="ChEBI" id="CHEBI:37565"/>
        <dbReference type="ChEBI" id="CHEBI:43474"/>
        <dbReference type="ChEBI" id="CHEBI:58189"/>
    </reaction>
    <physiologicalReaction direction="left-to-right" evidence="7">
        <dbReference type="Rhea" id="RHEA:19670"/>
    </physiologicalReaction>
</comment>
<comment type="cofactor">
    <cofactor evidence="1">
        <name>Mg(2+)</name>
        <dbReference type="ChEBI" id="CHEBI:18420"/>
    </cofactor>
    <cofactor evidence="1">
        <name>Mn(2+)</name>
        <dbReference type="ChEBI" id="CHEBI:29035"/>
    </cofactor>
</comment>
<comment type="subcellular location">
    <subcellularLocation>
        <location evidence="9">Cytoplasm</location>
    </subcellularLocation>
    <subcellularLocation>
        <location evidence="9">Nucleus</location>
    </subcellularLocation>
</comment>
<comment type="similarity">
    <text evidence="3">Belongs to the TRAFAC class translation factor GTPase superfamily. Classic translation factor GTPase family. SelB subfamily.</text>
</comment>
<dbReference type="EC" id="3.6.5.-" evidence="7"/>
<dbReference type="EMBL" id="AF283518">
    <property type="protein sequence ID" value="AAF91471.1"/>
    <property type="molecule type" value="mRNA"/>
</dbReference>
<dbReference type="EMBL" id="AF268871">
    <property type="protein sequence ID" value="AAG13374.1"/>
    <property type="molecule type" value="mRNA"/>
</dbReference>
<dbReference type="EMBL" id="AK028424">
    <property type="protein sequence ID" value="BAC25942.1"/>
    <property type="molecule type" value="mRNA"/>
</dbReference>
<dbReference type="EMBL" id="CH466523">
    <property type="protein sequence ID" value="EDK99245.1"/>
    <property type="molecule type" value="Genomic_DNA"/>
</dbReference>
<dbReference type="EMBL" id="BC024915">
    <property type="protein sequence ID" value="AAH24915.1"/>
    <property type="molecule type" value="mRNA"/>
</dbReference>
<dbReference type="CCDS" id="CCDS20335.1"/>
<dbReference type="RefSeq" id="NP_075547.1">
    <property type="nucleotide sequence ID" value="NM_023060.4"/>
</dbReference>
<dbReference type="SMR" id="Q9JHW4"/>
<dbReference type="BioGRID" id="211162">
    <property type="interactions" value="1"/>
</dbReference>
<dbReference type="FunCoup" id="Q9JHW4">
    <property type="interactions" value="1568"/>
</dbReference>
<dbReference type="IntAct" id="Q9JHW4">
    <property type="interactions" value="1"/>
</dbReference>
<dbReference type="STRING" id="10090.ENSMUSP00000131207"/>
<dbReference type="iPTMnet" id="Q9JHW4"/>
<dbReference type="PhosphoSitePlus" id="Q9JHW4"/>
<dbReference type="SwissPalm" id="Q9JHW4"/>
<dbReference type="jPOST" id="Q9JHW4"/>
<dbReference type="PaxDb" id="10090-ENSMUSP00000131207"/>
<dbReference type="PeptideAtlas" id="Q9JHW4"/>
<dbReference type="ProteomicsDB" id="256768"/>
<dbReference type="Pumba" id="Q9JHW4"/>
<dbReference type="Antibodypedia" id="46656">
    <property type="antibodies" value="109 antibodies from 21 providers"/>
</dbReference>
<dbReference type="DNASU" id="65967"/>
<dbReference type="Ensembl" id="ENSMUST00000165242.4">
    <property type="protein sequence ID" value="ENSMUSP00000131207.2"/>
    <property type="gene ID" value="ENSMUSG00000033216.10"/>
</dbReference>
<dbReference type="GeneID" id="65967"/>
<dbReference type="KEGG" id="mmu:65967"/>
<dbReference type="UCSC" id="uc009cvg.1">
    <property type="organism name" value="mouse"/>
</dbReference>
<dbReference type="AGR" id="MGI:2137092"/>
<dbReference type="CTD" id="60678"/>
<dbReference type="MGI" id="MGI:2137092">
    <property type="gene designation" value="Eefsec"/>
</dbReference>
<dbReference type="VEuPathDB" id="HostDB:ENSMUSG00000033216"/>
<dbReference type="eggNOG" id="KOG0461">
    <property type="taxonomic scope" value="Eukaryota"/>
</dbReference>
<dbReference type="GeneTree" id="ENSGT00940000158170"/>
<dbReference type="HOGENOM" id="CLU_019148_1_0_1"/>
<dbReference type="InParanoid" id="Q9JHW4"/>
<dbReference type="OMA" id="CFAIKGQ"/>
<dbReference type="OrthoDB" id="2067at2759"/>
<dbReference type="PhylomeDB" id="Q9JHW4"/>
<dbReference type="TreeFam" id="TF300432"/>
<dbReference type="BioGRID-ORCS" id="65967">
    <property type="hits" value="21 hits in 78 CRISPR screens"/>
</dbReference>
<dbReference type="ChiTaRS" id="Eefsec">
    <property type="organism name" value="mouse"/>
</dbReference>
<dbReference type="PRO" id="PR:Q9JHW4"/>
<dbReference type="Proteomes" id="UP000000589">
    <property type="component" value="Chromosome 6"/>
</dbReference>
<dbReference type="RNAct" id="Q9JHW4">
    <property type="molecule type" value="protein"/>
</dbReference>
<dbReference type="Bgee" id="ENSMUSG00000033216">
    <property type="expression patterns" value="Expressed in spermatocyte and 236 other cell types or tissues"/>
</dbReference>
<dbReference type="ExpressionAtlas" id="Q9JHW4">
    <property type="expression patterns" value="baseline and differential"/>
</dbReference>
<dbReference type="GO" id="GO:0005829">
    <property type="term" value="C:cytosol"/>
    <property type="evidence" value="ECO:0000304"/>
    <property type="project" value="Reactome"/>
</dbReference>
<dbReference type="GO" id="GO:0005739">
    <property type="term" value="C:mitochondrion"/>
    <property type="evidence" value="ECO:0007005"/>
    <property type="project" value="MGI"/>
</dbReference>
<dbReference type="GO" id="GO:0005634">
    <property type="term" value="C:nucleus"/>
    <property type="evidence" value="ECO:0007669"/>
    <property type="project" value="UniProtKB-SubCell"/>
</dbReference>
<dbReference type="GO" id="GO:1990904">
    <property type="term" value="C:ribonucleoprotein complex"/>
    <property type="evidence" value="ECO:0000314"/>
    <property type="project" value="MGI"/>
</dbReference>
<dbReference type="GO" id="GO:0005525">
    <property type="term" value="F:GTP binding"/>
    <property type="evidence" value="ECO:0000314"/>
    <property type="project" value="MGI"/>
</dbReference>
<dbReference type="GO" id="GO:0003924">
    <property type="term" value="F:GTPase activity"/>
    <property type="evidence" value="ECO:0000314"/>
    <property type="project" value="MGI"/>
</dbReference>
<dbReference type="GO" id="GO:0046872">
    <property type="term" value="F:metal ion binding"/>
    <property type="evidence" value="ECO:0007669"/>
    <property type="project" value="UniProtKB-KW"/>
</dbReference>
<dbReference type="GO" id="GO:0043021">
    <property type="term" value="F:ribonucleoprotein complex binding"/>
    <property type="evidence" value="ECO:0000314"/>
    <property type="project" value="MGI"/>
</dbReference>
<dbReference type="GO" id="GO:0035368">
    <property type="term" value="F:selenocysteine insertion sequence binding"/>
    <property type="evidence" value="ECO:0000314"/>
    <property type="project" value="MGI"/>
</dbReference>
<dbReference type="GO" id="GO:0003746">
    <property type="term" value="F:translation elongation factor activity"/>
    <property type="evidence" value="ECO:0000314"/>
    <property type="project" value="MGI"/>
</dbReference>
<dbReference type="GO" id="GO:0000049">
    <property type="term" value="F:tRNA binding"/>
    <property type="evidence" value="ECO:0000314"/>
    <property type="project" value="MGI"/>
</dbReference>
<dbReference type="GO" id="GO:0001514">
    <property type="term" value="P:selenocysteine incorporation"/>
    <property type="evidence" value="ECO:0000314"/>
    <property type="project" value="MGI"/>
</dbReference>
<dbReference type="CDD" id="cd04094">
    <property type="entry name" value="eSelB_III"/>
    <property type="match status" value="1"/>
</dbReference>
<dbReference type="CDD" id="cd01889">
    <property type="entry name" value="SelB_euk"/>
    <property type="match status" value="1"/>
</dbReference>
<dbReference type="CDD" id="cd03696">
    <property type="entry name" value="SelB_II"/>
    <property type="match status" value="1"/>
</dbReference>
<dbReference type="FunFam" id="3.40.50.300:FF:000900">
    <property type="entry name" value="Eukaryotic elongation factor, selenocysteine-tRNA-specific"/>
    <property type="match status" value="1"/>
</dbReference>
<dbReference type="FunFam" id="2.40.30.10:FF:000052">
    <property type="entry name" value="Selenocysteine-specific elongation factor EF-Sec"/>
    <property type="match status" value="1"/>
</dbReference>
<dbReference type="Gene3D" id="3.40.50.300">
    <property type="entry name" value="P-loop containing nucleotide triphosphate hydrolases"/>
    <property type="match status" value="1"/>
</dbReference>
<dbReference type="Gene3D" id="2.40.30.10">
    <property type="entry name" value="Translation factors"/>
    <property type="match status" value="1"/>
</dbReference>
<dbReference type="InterPro" id="IPR049394">
    <property type="entry name" value="eEFSec_C"/>
</dbReference>
<dbReference type="InterPro" id="IPR049393">
    <property type="entry name" value="eEFSec_III"/>
</dbReference>
<dbReference type="InterPro" id="IPR050055">
    <property type="entry name" value="EF-Tu_GTPase"/>
</dbReference>
<dbReference type="InterPro" id="IPR004161">
    <property type="entry name" value="EFTu-like_2"/>
</dbReference>
<dbReference type="InterPro" id="IPR027417">
    <property type="entry name" value="P-loop_NTPase"/>
</dbReference>
<dbReference type="InterPro" id="IPR000795">
    <property type="entry name" value="T_Tr_GTP-bd_dom"/>
</dbReference>
<dbReference type="InterPro" id="IPR009000">
    <property type="entry name" value="Transl_B-barrel_sf"/>
</dbReference>
<dbReference type="PANTHER" id="PTHR43721">
    <property type="entry name" value="ELONGATION FACTOR TU-RELATED"/>
    <property type="match status" value="1"/>
</dbReference>
<dbReference type="PANTHER" id="PTHR43721:SF11">
    <property type="entry name" value="SELENOCYSTEINE-SPECIFIC ELONGATION FACTOR"/>
    <property type="match status" value="1"/>
</dbReference>
<dbReference type="Pfam" id="PF21131">
    <property type="entry name" value="eEFSec_4th"/>
    <property type="match status" value="1"/>
</dbReference>
<dbReference type="Pfam" id="PF21208">
    <property type="entry name" value="euk_SelB_III"/>
    <property type="match status" value="1"/>
</dbReference>
<dbReference type="Pfam" id="PF00009">
    <property type="entry name" value="GTP_EFTU"/>
    <property type="match status" value="1"/>
</dbReference>
<dbReference type="Pfam" id="PF03144">
    <property type="entry name" value="GTP_EFTU_D2"/>
    <property type="match status" value="1"/>
</dbReference>
<dbReference type="PRINTS" id="PR00315">
    <property type="entry name" value="ELONGATNFCT"/>
</dbReference>
<dbReference type="SUPFAM" id="SSF52540">
    <property type="entry name" value="P-loop containing nucleoside triphosphate hydrolases"/>
    <property type="match status" value="1"/>
</dbReference>
<dbReference type="SUPFAM" id="SSF50447">
    <property type="entry name" value="Translation proteins"/>
    <property type="match status" value="1"/>
</dbReference>
<dbReference type="PROSITE" id="PS51722">
    <property type="entry name" value="G_TR_2"/>
    <property type="match status" value="1"/>
</dbReference>
<accession>Q9JHW4</accession>
<accession>Q6GTZ5</accession>
<protein>
    <recommendedName>
        <fullName>Selenocysteine-specific elongation factor</fullName>
        <ecNumber evidence="7">3.6.5.-</ecNumber>
    </recommendedName>
    <alternativeName>
        <fullName evidence="8">Elongation factor sec</fullName>
    </alternativeName>
    <alternativeName>
        <fullName evidence="8">Eukaryotic elongation factor, selenocysteine-tRNA-specific</fullName>
        <shortName evidence="8">mSelB</shortName>
    </alternativeName>
</protein>